<name>Y527_PARP8</name>
<comment type="function">
    <text evidence="1">Nucleotide-binding protein.</text>
</comment>
<comment type="similarity">
    <text evidence="1">Belongs to the YajQ family.</text>
</comment>
<accession>B2JDU3</accession>
<evidence type="ECO:0000255" key="1">
    <source>
        <dbReference type="HAMAP-Rule" id="MF_00632"/>
    </source>
</evidence>
<organism>
    <name type="scientific">Paraburkholderia phymatum (strain DSM 17167 / CIP 108236 / LMG 21445 / STM815)</name>
    <name type="common">Burkholderia phymatum</name>
    <dbReference type="NCBI Taxonomy" id="391038"/>
    <lineage>
        <taxon>Bacteria</taxon>
        <taxon>Pseudomonadati</taxon>
        <taxon>Pseudomonadota</taxon>
        <taxon>Betaproteobacteria</taxon>
        <taxon>Burkholderiales</taxon>
        <taxon>Burkholderiaceae</taxon>
        <taxon>Paraburkholderia</taxon>
    </lineage>
</organism>
<keyword id="KW-0547">Nucleotide-binding</keyword>
<keyword id="KW-1185">Reference proteome</keyword>
<proteinExistence type="inferred from homology"/>
<dbReference type="EMBL" id="CP001043">
    <property type="protein sequence ID" value="ACC69719.1"/>
    <property type="molecule type" value="Genomic_DNA"/>
</dbReference>
<dbReference type="RefSeq" id="WP_012399944.1">
    <property type="nucleotide sequence ID" value="NZ_CADFGH010000001.1"/>
</dbReference>
<dbReference type="SMR" id="B2JDU3"/>
<dbReference type="STRING" id="391038.Bphy_0527"/>
<dbReference type="KEGG" id="bph:Bphy_0527"/>
<dbReference type="eggNOG" id="COG1666">
    <property type="taxonomic scope" value="Bacteria"/>
</dbReference>
<dbReference type="HOGENOM" id="CLU_099839_1_0_4"/>
<dbReference type="OrthoDB" id="9801447at2"/>
<dbReference type="Proteomes" id="UP000001192">
    <property type="component" value="Chromosome 1"/>
</dbReference>
<dbReference type="GO" id="GO:0005829">
    <property type="term" value="C:cytosol"/>
    <property type="evidence" value="ECO:0007669"/>
    <property type="project" value="TreeGrafter"/>
</dbReference>
<dbReference type="GO" id="GO:0000166">
    <property type="term" value="F:nucleotide binding"/>
    <property type="evidence" value="ECO:0007669"/>
    <property type="project" value="TreeGrafter"/>
</dbReference>
<dbReference type="CDD" id="cd11740">
    <property type="entry name" value="YajQ_like"/>
    <property type="match status" value="1"/>
</dbReference>
<dbReference type="Gene3D" id="3.30.70.860">
    <property type="match status" value="1"/>
</dbReference>
<dbReference type="HAMAP" id="MF_00632">
    <property type="entry name" value="YajQ"/>
    <property type="match status" value="1"/>
</dbReference>
<dbReference type="InterPro" id="IPR007551">
    <property type="entry name" value="DUF520"/>
</dbReference>
<dbReference type="InterPro" id="IPR035571">
    <property type="entry name" value="UPF0234-like_C"/>
</dbReference>
<dbReference type="InterPro" id="IPR036183">
    <property type="entry name" value="YajQ-like_sf"/>
</dbReference>
<dbReference type="NCBIfam" id="NF003819">
    <property type="entry name" value="PRK05412.1"/>
    <property type="match status" value="1"/>
</dbReference>
<dbReference type="PANTHER" id="PTHR30476">
    <property type="entry name" value="UPF0234 PROTEIN YAJQ"/>
    <property type="match status" value="1"/>
</dbReference>
<dbReference type="PANTHER" id="PTHR30476:SF0">
    <property type="entry name" value="UPF0234 PROTEIN YAJQ"/>
    <property type="match status" value="1"/>
</dbReference>
<dbReference type="Pfam" id="PF04461">
    <property type="entry name" value="DUF520"/>
    <property type="match status" value="1"/>
</dbReference>
<dbReference type="SUPFAM" id="SSF89963">
    <property type="entry name" value="YajQ-like"/>
    <property type="match status" value="2"/>
</dbReference>
<feature type="chain" id="PRO_1000130608" description="Nucleotide-binding protein Bphy_0527">
    <location>
        <begin position="1"/>
        <end position="161"/>
    </location>
</feature>
<protein>
    <recommendedName>
        <fullName evidence="1">Nucleotide-binding protein Bphy_0527</fullName>
    </recommendedName>
</protein>
<gene>
    <name type="ordered locus">Bphy_0527</name>
</gene>
<reference key="1">
    <citation type="journal article" date="2014" name="Stand. Genomic Sci.">
        <title>Complete genome sequence of Burkholderia phymatum STM815(T), a broad host range and efficient nitrogen-fixing symbiont of Mimosa species.</title>
        <authorList>
            <person name="Moulin L."/>
            <person name="Klonowska A."/>
            <person name="Caroline B."/>
            <person name="Booth K."/>
            <person name="Vriezen J.A."/>
            <person name="Melkonian R."/>
            <person name="James E.K."/>
            <person name="Young J.P."/>
            <person name="Bena G."/>
            <person name="Hauser L."/>
            <person name="Land M."/>
            <person name="Kyrpides N."/>
            <person name="Bruce D."/>
            <person name="Chain P."/>
            <person name="Copeland A."/>
            <person name="Pitluck S."/>
            <person name="Woyke T."/>
            <person name="Lizotte-Waniewski M."/>
            <person name="Bristow J."/>
            <person name="Riley M."/>
        </authorList>
    </citation>
    <scope>NUCLEOTIDE SEQUENCE [LARGE SCALE GENOMIC DNA]</scope>
    <source>
        <strain>DSM 17167 / CIP 108236 / LMG 21445 / STM815</strain>
    </source>
</reference>
<sequence>MPSFDVVCEANMIEVKNAIEQSNKEISTRFDFKGSDARVEQKERELTAFADDEFKLGQVKDVLVSKMAKRNVDVRFLDYGKIEKIGGDKVKQVVTVKKGVSGDLAKKIVKLVKDSKIKVQASIQGDAVRVTGTKRDDLQSVIAMLRKDVTDTPLDFNNFRD</sequence>